<dbReference type="EC" id="6.3.5.-" evidence="1"/>
<dbReference type="EMBL" id="CP001071">
    <property type="protein sequence ID" value="ACD05601.1"/>
    <property type="molecule type" value="Genomic_DNA"/>
</dbReference>
<dbReference type="RefSeq" id="WP_012420815.1">
    <property type="nucleotide sequence ID" value="NZ_CP071807.1"/>
</dbReference>
<dbReference type="SMR" id="B2UMP5"/>
<dbReference type="STRING" id="349741.Amuc_1783"/>
<dbReference type="PaxDb" id="349741-Amuc_1783"/>
<dbReference type="KEGG" id="amu:Amuc_1783"/>
<dbReference type="eggNOG" id="COG0721">
    <property type="taxonomic scope" value="Bacteria"/>
</dbReference>
<dbReference type="HOGENOM" id="CLU_105899_1_0_0"/>
<dbReference type="OrthoDB" id="9813938at2"/>
<dbReference type="BioCyc" id="AMUC349741:G1GBX-1899-MONOMER"/>
<dbReference type="Proteomes" id="UP000001031">
    <property type="component" value="Chromosome"/>
</dbReference>
<dbReference type="GO" id="GO:0050566">
    <property type="term" value="F:asparaginyl-tRNA synthase (glutamine-hydrolyzing) activity"/>
    <property type="evidence" value="ECO:0007669"/>
    <property type="project" value="RHEA"/>
</dbReference>
<dbReference type="GO" id="GO:0005524">
    <property type="term" value="F:ATP binding"/>
    <property type="evidence" value="ECO:0007669"/>
    <property type="project" value="UniProtKB-KW"/>
</dbReference>
<dbReference type="GO" id="GO:0050567">
    <property type="term" value="F:glutaminyl-tRNA synthase (glutamine-hydrolyzing) activity"/>
    <property type="evidence" value="ECO:0007669"/>
    <property type="project" value="UniProtKB-UniRule"/>
</dbReference>
<dbReference type="GO" id="GO:0070681">
    <property type="term" value="P:glutaminyl-tRNAGln biosynthesis via transamidation"/>
    <property type="evidence" value="ECO:0007669"/>
    <property type="project" value="TreeGrafter"/>
</dbReference>
<dbReference type="GO" id="GO:0006450">
    <property type="term" value="P:regulation of translational fidelity"/>
    <property type="evidence" value="ECO:0007669"/>
    <property type="project" value="InterPro"/>
</dbReference>
<dbReference type="GO" id="GO:0006412">
    <property type="term" value="P:translation"/>
    <property type="evidence" value="ECO:0007669"/>
    <property type="project" value="UniProtKB-UniRule"/>
</dbReference>
<dbReference type="Gene3D" id="1.10.20.60">
    <property type="entry name" value="Glu-tRNAGln amidotransferase C subunit, N-terminal domain"/>
    <property type="match status" value="1"/>
</dbReference>
<dbReference type="HAMAP" id="MF_00122">
    <property type="entry name" value="GatC"/>
    <property type="match status" value="1"/>
</dbReference>
<dbReference type="InterPro" id="IPR036113">
    <property type="entry name" value="Asp/Glu-ADT_sf_sub_c"/>
</dbReference>
<dbReference type="InterPro" id="IPR003837">
    <property type="entry name" value="GatC"/>
</dbReference>
<dbReference type="NCBIfam" id="TIGR00135">
    <property type="entry name" value="gatC"/>
    <property type="match status" value="1"/>
</dbReference>
<dbReference type="PANTHER" id="PTHR15004">
    <property type="entry name" value="GLUTAMYL-TRNA(GLN) AMIDOTRANSFERASE SUBUNIT C, MITOCHONDRIAL"/>
    <property type="match status" value="1"/>
</dbReference>
<dbReference type="PANTHER" id="PTHR15004:SF0">
    <property type="entry name" value="GLUTAMYL-TRNA(GLN) AMIDOTRANSFERASE SUBUNIT C, MITOCHONDRIAL"/>
    <property type="match status" value="1"/>
</dbReference>
<dbReference type="Pfam" id="PF02686">
    <property type="entry name" value="GatC"/>
    <property type="match status" value="1"/>
</dbReference>
<dbReference type="SUPFAM" id="SSF141000">
    <property type="entry name" value="Glu-tRNAGln amidotransferase C subunit"/>
    <property type="match status" value="1"/>
</dbReference>
<protein>
    <recommendedName>
        <fullName evidence="1">Aspartyl/glutamyl-tRNA(Asn/Gln) amidotransferase subunit C</fullName>
        <shortName evidence="1">Asp/Glu-ADT subunit C</shortName>
        <ecNumber evidence="1">6.3.5.-</ecNumber>
    </recommendedName>
</protein>
<gene>
    <name evidence="1" type="primary">gatC</name>
    <name type="ordered locus">Amuc_1783</name>
</gene>
<comment type="function">
    <text evidence="1">Allows the formation of correctly charged Asn-tRNA(Asn) or Gln-tRNA(Gln) through the transamidation of misacylated Asp-tRNA(Asn) or Glu-tRNA(Gln) in organisms which lack either or both of asparaginyl-tRNA or glutaminyl-tRNA synthetases. The reaction takes place in the presence of glutamine and ATP through an activated phospho-Asp-tRNA(Asn) or phospho-Glu-tRNA(Gln).</text>
</comment>
<comment type="catalytic activity">
    <reaction evidence="1">
        <text>L-glutamyl-tRNA(Gln) + L-glutamine + ATP + H2O = L-glutaminyl-tRNA(Gln) + L-glutamate + ADP + phosphate + H(+)</text>
        <dbReference type="Rhea" id="RHEA:17521"/>
        <dbReference type="Rhea" id="RHEA-COMP:9681"/>
        <dbReference type="Rhea" id="RHEA-COMP:9684"/>
        <dbReference type="ChEBI" id="CHEBI:15377"/>
        <dbReference type="ChEBI" id="CHEBI:15378"/>
        <dbReference type="ChEBI" id="CHEBI:29985"/>
        <dbReference type="ChEBI" id="CHEBI:30616"/>
        <dbReference type="ChEBI" id="CHEBI:43474"/>
        <dbReference type="ChEBI" id="CHEBI:58359"/>
        <dbReference type="ChEBI" id="CHEBI:78520"/>
        <dbReference type="ChEBI" id="CHEBI:78521"/>
        <dbReference type="ChEBI" id="CHEBI:456216"/>
    </reaction>
</comment>
<comment type="catalytic activity">
    <reaction evidence="1">
        <text>L-aspartyl-tRNA(Asn) + L-glutamine + ATP + H2O = L-asparaginyl-tRNA(Asn) + L-glutamate + ADP + phosphate + 2 H(+)</text>
        <dbReference type="Rhea" id="RHEA:14513"/>
        <dbReference type="Rhea" id="RHEA-COMP:9674"/>
        <dbReference type="Rhea" id="RHEA-COMP:9677"/>
        <dbReference type="ChEBI" id="CHEBI:15377"/>
        <dbReference type="ChEBI" id="CHEBI:15378"/>
        <dbReference type="ChEBI" id="CHEBI:29985"/>
        <dbReference type="ChEBI" id="CHEBI:30616"/>
        <dbReference type="ChEBI" id="CHEBI:43474"/>
        <dbReference type="ChEBI" id="CHEBI:58359"/>
        <dbReference type="ChEBI" id="CHEBI:78515"/>
        <dbReference type="ChEBI" id="CHEBI:78516"/>
        <dbReference type="ChEBI" id="CHEBI:456216"/>
    </reaction>
</comment>
<comment type="subunit">
    <text evidence="1">Heterotrimer of A, B and C subunits.</text>
</comment>
<comment type="similarity">
    <text evidence="1">Belongs to the GatC family.</text>
</comment>
<feature type="chain" id="PRO_1000095258" description="Aspartyl/glutamyl-tRNA(Asn/Gln) amidotransferase subunit C">
    <location>
        <begin position="1"/>
        <end position="97"/>
    </location>
</feature>
<feature type="region of interest" description="Disordered" evidence="2">
    <location>
        <begin position="68"/>
        <end position="97"/>
    </location>
</feature>
<feature type="compositionally biased region" description="Polar residues" evidence="2">
    <location>
        <begin position="70"/>
        <end position="88"/>
    </location>
</feature>
<proteinExistence type="inferred from homology"/>
<organism>
    <name type="scientific">Akkermansia muciniphila (strain ATCC BAA-835 / DSM 22959 / JCM 33894 / BCRC 81048 / CCUG 64013 / CIP 107961 / Muc)</name>
    <dbReference type="NCBI Taxonomy" id="349741"/>
    <lineage>
        <taxon>Bacteria</taxon>
        <taxon>Pseudomonadati</taxon>
        <taxon>Verrucomicrobiota</taxon>
        <taxon>Verrucomicrobiia</taxon>
        <taxon>Verrucomicrobiales</taxon>
        <taxon>Akkermansiaceae</taxon>
        <taxon>Akkermansia</taxon>
    </lineage>
</organism>
<sequence length="97" mass="10757">MSTPQIDVAYIAKLARIDLTEEETALFSKDLDKVLAYITKLESYDVTGIAPMNHPLPAMDVMREDIPETGFTQEEALSNAPQQSQGQFRTPKVVESA</sequence>
<accession>B2UMP5</accession>
<evidence type="ECO:0000255" key="1">
    <source>
        <dbReference type="HAMAP-Rule" id="MF_00122"/>
    </source>
</evidence>
<evidence type="ECO:0000256" key="2">
    <source>
        <dbReference type="SAM" id="MobiDB-lite"/>
    </source>
</evidence>
<name>GATC_AKKM8</name>
<reference key="1">
    <citation type="journal article" date="2011" name="PLoS ONE">
        <title>The genome of Akkermansia muciniphila, a dedicated intestinal mucin degrader, and its use in exploring intestinal metagenomes.</title>
        <authorList>
            <person name="van Passel M.W."/>
            <person name="Kant R."/>
            <person name="Zoetendal E.G."/>
            <person name="Plugge C.M."/>
            <person name="Derrien M."/>
            <person name="Malfatti S.A."/>
            <person name="Chain P.S."/>
            <person name="Woyke T."/>
            <person name="Palva A."/>
            <person name="de Vos W.M."/>
            <person name="Smidt H."/>
        </authorList>
    </citation>
    <scope>NUCLEOTIDE SEQUENCE [LARGE SCALE GENOMIC DNA]</scope>
    <source>
        <strain>ATCC BAA-835 / DSM 22959 / JCM 33894 / BCRC 81048 / CCUG 64013 / CIP 107961 / Muc</strain>
    </source>
</reference>
<keyword id="KW-0067">ATP-binding</keyword>
<keyword id="KW-0436">Ligase</keyword>
<keyword id="KW-0547">Nucleotide-binding</keyword>
<keyword id="KW-0648">Protein biosynthesis</keyword>
<keyword id="KW-1185">Reference proteome</keyword>